<dbReference type="EC" id="2.7.11.1" evidence="3"/>
<dbReference type="EMBL" id="M93665">
    <property type="protein sequence ID" value="AAA18213.1"/>
    <property type="molecule type" value="mRNA"/>
</dbReference>
<dbReference type="EMBL" id="X54962">
    <property type="protein sequence ID" value="CAA38710.1"/>
    <property type="molecule type" value="mRNA"/>
</dbReference>
<dbReference type="EMBL" id="BC112816">
    <property type="protein sequence ID" value="AAI12817.1"/>
    <property type="molecule type" value="mRNA"/>
</dbReference>
<dbReference type="PIR" id="S21335">
    <property type="entry name" value="S21335"/>
</dbReference>
<dbReference type="RefSeq" id="NP_777060.2">
    <property type="nucleotide sequence ID" value="NM_174635.2"/>
</dbReference>
<dbReference type="SMR" id="P68399"/>
<dbReference type="BioGRID" id="159676">
    <property type="interactions" value="4"/>
</dbReference>
<dbReference type="CORUM" id="P68399"/>
<dbReference type="FunCoup" id="P68399">
    <property type="interactions" value="3902"/>
</dbReference>
<dbReference type="STRING" id="9913.ENSBTAP00000059962"/>
<dbReference type="ChEMBL" id="CHEMBL3988628"/>
<dbReference type="GlyGen" id="P68399">
    <property type="glycosylation" value="1 site, 1 O-linked glycan (1 site)"/>
</dbReference>
<dbReference type="iPTMnet" id="P68399"/>
<dbReference type="PaxDb" id="9913-ENSBTAP00000050939"/>
<dbReference type="Ensembl" id="ENSBTAT00000057062.3">
    <property type="protein sequence ID" value="ENSBTAP00000050939.3"/>
    <property type="gene ID" value="ENSBTAG00000012341.7"/>
</dbReference>
<dbReference type="GeneID" id="282419"/>
<dbReference type="KEGG" id="bta:282419"/>
<dbReference type="CTD" id="1457"/>
<dbReference type="VEuPathDB" id="HostDB:ENSBTAG00000012341"/>
<dbReference type="eggNOG" id="KOG0668">
    <property type="taxonomic scope" value="Eukaryota"/>
</dbReference>
<dbReference type="GeneTree" id="ENSGT00390000004215"/>
<dbReference type="InParanoid" id="P68399"/>
<dbReference type="OMA" id="ECHMIEW"/>
<dbReference type="OrthoDB" id="10254671at2759"/>
<dbReference type="Reactome" id="R-BTA-1483191">
    <property type="pathway name" value="Synthesis of PC"/>
</dbReference>
<dbReference type="Reactome" id="R-BTA-201688">
    <property type="pathway name" value="WNT mediated activation of DVL"/>
</dbReference>
<dbReference type="Reactome" id="R-BTA-2514853">
    <property type="pathway name" value="Condensation of Prometaphase Chromosomes"/>
</dbReference>
<dbReference type="Reactome" id="R-BTA-6804756">
    <property type="pathway name" value="Regulation of TP53 Activity through Phosphorylation"/>
</dbReference>
<dbReference type="Reactome" id="R-BTA-6814122">
    <property type="pathway name" value="Cooperation of PDCL (PhLP1) and TRiC/CCT in G-protein beta folding"/>
</dbReference>
<dbReference type="Reactome" id="R-BTA-8934903">
    <property type="pathway name" value="Receptor Mediated Mitophagy"/>
</dbReference>
<dbReference type="Reactome" id="R-BTA-8939243">
    <property type="pathway name" value="RUNX1 interacts with co-factors whose precise effect on RUNX1 targets is not known"/>
</dbReference>
<dbReference type="Reactome" id="R-BTA-8948751">
    <property type="pathway name" value="Regulation of PTEN stability and activity"/>
</dbReference>
<dbReference type="Proteomes" id="UP000009136">
    <property type="component" value="Chromosome 13"/>
</dbReference>
<dbReference type="Bgee" id="ENSBTAG00000012341">
    <property type="expression patterns" value="Expressed in conceptus and 106 other cell types or tissues"/>
</dbReference>
<dbReference type="GO" id="GO:0005829">
    <property type="term" value="C:cytosol"/>
    <property type="evidence" value="ECO:0000318"/>
    <property type="project" value="GO_Central"/>
</dbReference>
<dbReference type="GO" id="GO:0005634">
    <property type="term" value="C:nucleus"/>
    <property type="evidence" value="ECO:0000318"/>
    <property type="project" value="GO_Central"/>
</dbReference>
<dbReference type="GO" id="GO:0005956">
    <property type="term" value="C:protein kinase CK2 complex"/>
    <property type="evidence" value="ECO:0000318"/>
    <property type="project" value="GO_Central"/>
</dbReference>
<dbReference type="GO" id="GO:0005524">
    <property type="term" value="F:ATP binding"/>
    <property type="evidence" value="ECO:0007669"/>
    <property type="project" value="UniProtKB-KW"/>
</dbReference>
<dbReference type="GO" id="GO:0106310">
    <property type="term" value="F:protein serine kinase activity"/>
    <property type="evidence" value="ECO:0007669"/>
    <property type="project" value="RHEA"/>
</dbReference>
<dbReference type="GO" id="GO:0004674">
    <property type="term" value="F:protein serine/threonine kinase activity"/>
    <property type="evidence" value="ECO:0000250"/>
    <property type="project" value="UniProtKB"/>
</dbReference>
<dbReference type="GO" id="GO:0006915">
    <property type="term" value="P:apoptotic process"/>
    <property type="evidence" value="ECO:0007669"/>
    <property type="project" value="UniProtKB-KW"/>
</dbReference>
<dbReference type="GO" id="GO:0006302">
    <property type="term" value="P:double-strand break repair"/>
    <property type="evidence" value="ECO:0000250"/>
    <property type="project" value="UniProtKB"/>
</dbReference>
<dbReference type="GO" id="GO:2001234">
    <property type="term" value="P:negative regulation of apoptotic signaling pathway"/>
    <property type="evidence" value="ECO:0000250"/>
    <property type="project" value="UniProtKB"/>
</dbReference>
<dbReference type="GO" id="GO:2000042">
    <property type="term" value="P:negative regulation of double-strand break repair via homologous recombination"/>
    <property type="evidence" value="ECO:0000250"/>
    <property type="project" value="UniProtKB"/>
</dbReference>
<dbReference type="GO" id="GO:1905337">
    <property type="term" value="P:positive regulation of aggrephagy"/>
    <property type="evidence" value="ECO:0000250"/>
    <property type="project" value="UniProtKB"/>
</dbReference>
<dbReference type="GO" id="GO:0030307">
    <property type="term" value="P:positive regulation of cell growth"/>
    <property type="evidence" value="ECO:0000250"/>
    <property type="project" value="UniProtKB"/>
</dbReference>
<dbReference type="GO" id="GO:0008284">
    <property type="term" value="P:positive regulation of cell population proliferation"/>
    <property type="evidence" value="ECO:0000250"/>
    <property type="project" value="UniProtKB"/>
</dbReference>
<dbReference type="GO" id="GO:0045732">
    <property type="term" value="P:positive regulation of protein catabolic process"/>
    <property type="evidence" value="ECO:0000250"/>
    <property type="project" value="UniProtKB"/>
</dbReference>
<dbReference type="GO" id="GO:0030177">
    <property type="term" value="P:positive regulation of Wnt signaling pathway"/>
    <property type="evidence" value="ECO:0000250"/>
    <property type="project" value="UniProtKB"/>
</dbReference>
<dbReference type="GO" id="GO:0051726">
    <property type="term" value="P:regulation of cell cycle"/>
    <property type="evidence" value="ECO:0000318"/>
    <property type="project" value="GO_Central"/>
</dbReference>
<dbReference type="GO" id="GO:1905818">
    <property type="term" value="P:regulation of chromosome separation"/>
    <property type="evidence" value="ECO:0000250"/>
    <property type="project" value="UniProtKB"/>
</dbReference>
<dbReference type="GO" id="GO:0048511">
    <property type="term" value="P:rhythmic process"/>
    <property type="evidence" value="ECO:0007669"/>
    <property type="project" value="UniProtKB-KW"/>
</dbReference>
<dbReference type="GO" id="GO:0016055">
    <property type="term" value="P:Wnt signaling pathway"/>
    <property type="evidence" value="ECO:0007669"/>
    <property type="project" value="UniProtKB-KW"/>
</dbReference>
<dbReference type="CDD" id="cd14132">
    <property type="entry name" value="STKc_CK2_alpha"/>
    <property type="match status" value="1"/>
</dbReference>
<dbReference type="FunFam" id="1.10.510.10:FF:000059">
    <property type="entry name" value="Casein kinase II subunit alpha"/>
    <property type="match status" value="1"/>
</dbReference>
<dbReference type="FunFam" id="3.30.200.20:FF:000088">
    <property type="entry name" value="Casein kinase II subunit alpha"/>
    <property type="match status" value="1"/>
</dbReference>
<dbReference type="Gene3D" id="3.30.200.20">
    <property type="entry name" value="Phosphorylase Kinase, domain 1"/>
    <property type="match status" value="1"/>
</dbReference>
<dbReference type="Gene3D" id="1.10.510.10">
    <property type="entry name" value="Transferase(Phosphotransferase) domain 1"/>
    <property type="match status" value="1"/>
</dbReference>
<dbReference type="InterPro" id="IPR045216">
    <property type="entry name" value="CK2_alpha"/>
</dbReference>
<dbReference type="InterPro" id="IPR011009">
    <property type="entry name" value="Kinase-like_dom_sf"/>
</dbReference>
<dbReference type="InterPro" id="IPR000719">
    <property type="entry name" value="Prot_kinase_dom"/>
</dbReference>
<dbReference type="InterPro" id="IPR017441">
    <property type="entry name" value="Protein_kinase_ATP_BS"/>
</dbReference>
<dbReference type="InterPro" id="IPR008271">
    <property type="entry name" value="Ser/Thr_kinase_AS"/>
</dbReference>
<dbReference type="PANTHER" id="PTHR24054">
    <property type="entry name" value="CASEIN KINASE II SUBUNIT ALPHA"/>
    <property type="match status" value="1"/>
</dbReference>
<dbReference type="PANTHER" id="PTHR24054:SF16">
    <property type="entry name" value="CASEIN KINASE II SUBUNIT ALPHA-RELATED"/>
    <property type="match status" value="1"/>
</dbReference>
<dbReference type="Pfam" id="PF00069">
    <property type="entry name" value="Pkinase"/>
    <property type="match status" value="1"/>
</dbReference>
<dbReference type="SMART" id="SM00220">
    <property type="entry name" value="S_TKc"/>
    <property type="match status" value="1"/>
</dbReference>
<dbReference type="SUPFAM" id="SSF56112">
    <property type="entry name" value="Protein kinase-like (PK-like)"/>
    <property type="match status" value="1"/>
</dbReference>
<dbReference type="PROSITE" id="PS00107">
    <property type="entry name" value="PROTEIN_KINASE_ATP"/>
    <property type="match status" value="1"/>
</dbReference>
<dbReference type="PROSITE" id="PS50011">
    <property type="entry name" value="PROTEIN_KINASE_DOM"/>
    <property type="match status" value="1"/>
</dbReference>
<dbReference type="PROSITE" id="PS00108">
    <property type="entry name" value="PROTEIN_KINASE_ST"/>
    <property type="match status" value="1"/>
</dbReference>
<keyword id="KW-0053">Apoptosis</keyword>
<keyword id="KW-0067">ATP-binding</keyword>
<keyword id="KW-0090">Biological rhythms</keyword>
<keyword id="KW-0131">Cell cycle</keyword>
<keyword id="KW-0903">Direct protein sequencing</keyword>
<keyword id="KW-0418">Kinase</keyword>
<keyword id="KW-0547">Nucleotide-binding</keyword>
<keyword id="KW-0539">Nucleus</keyword>
<keyword id="KW-0597">Phosphoprotein</keyword>
<keyword id="KW-1185">Reference proteome</keyword>
<keyword id="KW-0723">Serine/threonine-protein kinase</keyword>
<keyword id="KW-0804">Transcription</keyword>
<keyword id="KW-0805">Transcription regulation</keyword>
<keyword id="KW-0808">Transferase</keyword>
<keyword id="KW-0879">Wnt signaling pathway</keyword>
<feature type="chain" id="PRO_0000085882" description="Casein kinase II subunit alpha">
    <location>
        <begin position="1"/>
        <end position="391"/>
    </location>
</feature>
<feature type="domain" description="Protein kinase" evidence="4">
    <location>
        <begin position="39"/>
        <end position="324"/>
    </location>
</feature>
<feature type="region of interest" description="Interaction with beta subunit" evidence="1">
    <location>
        <begin position="36"/>
        <end position="41"/>
    </location>
</feature>
<feature type="active site" description="Proton acceptor">
    <location>
        <position position="156"/>
    </location>
</feature>
<feature type="binding site" evidence="4">
    <location>
        <begin position="45"/>
        <end position="53"/>
    </location>
    <ligand>
        <name>ATP</name>
        <dbReference type="ChEBI" id="CHEBI:30616"/>
    </ligand>
</feature>
<feature type="binding site" evidence="4">
    <location>
        <position position="68"/>
    </location>
    <ligand>
        <name>ATP</name>
        <dbReference type="ChEBI" id="CHEBI:30616"/>
    </ligand>
</feature>
<feature type="modified residue" description="Phosphothreonine; by CDK1" evidence="3">
    <location>
        <position position="344"/>
    </location>
</feature>
<feature type="modified residue" description="Phosphothreonine; by CDK1" evidence="3">
    <location>
        <position position="360"/>
    </location>
</feature>
<feature type="modified residue" description="Phosphoserine; by CDK1" evidence="3">
    <location>
        <position position="362"/>
    </location>
</feature>
<feature type="modified residue" description="Phosphoserine; by CDK1" evidence="3">
    <location>
        <position position="370"/>
    </location>
</feature>
<feature type="sequence conflict" description="In Ref. 3; AAI12817." evidence="5" ref="3">
    <original>P</original>
    <variation>S</variation>
    <location>
        <position position="382"/>
    </location>
</feature>
<gene>
    <name type="primary">CSNK2A1</name>
    <name type="synonym">CK2A1</name>
</gene>
<accession>P68399</accession>
<accession>P19138</accession>
<accession>P20426</accession>
<accession>Q14013</accession>
<accession>Q2KI05</accession>
<proteinExistence type="evidence at protein level"/>
<comment type="function">
    <text evidence="2 3">Catalytic subunit of a constitutively active serine/threonine-protein kinase complex that phosphorylates a large number of substrates containing acidic residues C-terminal to the phosphorylated serine or threonine. Regulates numerous cellular processes, such as cell cycle progression, apoptosis and transcription, as well as viral infection. May act as a regulatory node which integrates and coordinates numerous signals leading to an appropriate cellular response. During mitosis, functions as a component of the p53/TP53-dependent spindle assembly checkpoint (SAC) that maintains cyclin-B-CDK1 activity and G2 arrest in response to spindle damage. Also required for p53/TP53-mediated apoptosis, phosphorylating 'Ser-392' of p53/TP53 following UV irradiation. Phosphorylates a number of DNA repair proteins in response to DNA damage, such as MDC1, MRE11, RAD9A, RAD51 and HTATSF1, promoting their recruitment to DNA damage sites. Can also negatively regulate apoptosis. Phosphorylates the caspases CASP9 and CASP2 and the apoptotic regulator NOL3. Phosphorylation protects CASP9 from cleavage and activation by CASP8, and inhibits the dimerization of CASP2 and activation of CASP8. Phosphorylates YY1, protecting YY1 from cleavage by CASP7 during apoptosis. Regulates transcription by direct phosphorylation of RNA polymerases I, II, III and IV. Also phosphorylates and regulates numerous transcription factors including NF-kappa-B, STAT1, CREB1, IRF1, IRF2, ATF1, ATF4, SRF, MAX, JUN, FOS, MYC and MYB. Phosphorylates Hsp90 and its co-chaperones FKBP4 and CDC37, which is essential for chaperone function. Mediates sequential phosphorylation of FNIP1, promoting its gradual interaction with Hsp90, leading to activate both kinase and non-kinase client proteins of Hsp90. Regulates Wnt signaling by phosphorylating CTNNB1 and the transcription factor LEF1. Acts as an ectokinase that phosphorylates several extracellular proteins. Plays an important role in the circadian clock function by phosphorylating BMAL1 at 'Ser-90' which is pivotal for its interaction with CLOCK and which controls CLOCK nuclear entry (By similarity). Phosphorylates FMR1, promoting FMR1-dependent formation of a membraneless compartment (By similarity). May phosphorylate histone H2A on 'Ser-1' (By similarity).</text>
</comment>
<comment type="catalytic activity">
    <reaction evidence="3">
        <text>L-seryl-[protein] + ATP = O-phospho-L-seryl-[protein] + ADP + H(+)</text>
        <dbReference type="Rhea" id="RHEA:17989"/>
        <dbReference type="Rhea" id="RHEA-COMP:9863"/>
        <dbReference type="Rhea" id="RHEA-COMP:11604"/>
        <dbReference type="ChEBI" id="CHEBI:15378"/>
        <dbReference type="ChEBI" id="CHEBI:29999"/>
        <dbReference type="ChEBI" id="CHEBI:30616"/>
        <dbReference type="ChEBI" id="CHEBI:83421"/>
        <dbReference type="ChEBI" id="CHEBI:456216"/>
        <dbReference type="EC" id="2.7.11.1"/>
    </reaction>
    <physiologicalReaction direction="left-to-right" evidence="3">
        <dbReference type="Rhea" id="RHEA:17990"/>
    </physiologicalReaction>
</comment>
<comment type="catalytic activity">
    <reaction evidence="3">
        <text>L-threonyl-[protein] + ATP = O-phospho-L-threonyl-[protein] + ADP + H(+)</text>
        <dbReference type="Rhea" id="RHEA:46608"/>
        <dbReference type="Rhea" id="RHEA-COMP:11060"/>
        <dbReference type="Rhea" id="RHEA-COMP:11605"/>
        <dbReference type="ChEBI" id="CHEBI:15378"/>
        <dbReference type="ChEBI" id="CHEBI:30013"/>
        <dbReference type="ChEBI" id="CHEBI:30616"/>
        <dbReference type="ChEBI" id="CHEBI:61977"/>
        <dbReference type="ChEBI" id="CHEBI:456216"/>
        <dbReference type="EC" id="2.7.11.1"/>
    </reaction>
</comment>
<comment type="activity regulation">
    <text evidence="1">Constitutively active protein kinase whose activity is not directly affected by phosphorylation. Seems to be regulated by level of expression and localization (By similarity).</text>
</comment>
<comment type="subunit">
    <text evidence="3">Heterotetramer composed of two catalytic subunits (alpha chain and/or alpha' chain) and two regulatory subunits (beta chains). The tetramer can exist as a combination of 2 alpha/2 beta, 2 alpha'/2 beta or 1 alpha/1 alpha'/2 beta subunits. Also part of a CK2-SPT16-SSRP1 complex composed of SSRP1, SUPT16H, CSNK2A1, CSNK2A2 and CSNK2B, which forms following UV irradiation. Interacts with RNPS1. Interacts with SNAI1. Interacts with PML. Interacts with CCAR2. Interacts with HIRIP3 (By similarity).</text>
</comment>
<comment type="subcellular location">
    <subcellularLocation>
        <location evidence="3">Nucleus</location>
    </subcellularLocation>
</comment>
<comment type="PTM">
    <text evidence="1">Phosphorylated at Thr-344, Thr-360, Ser-362 and Ser-370 by CDK1 in prophase and metaphase and dephosphorylated during anaphase. Phosphorylation does not directly affect casein kinase 2 activity, but may contribute to its regulation by forming binding sites for interacting proteins and/or targeting it to different compartments (By similarity).</text>
</comment>
<comment type="miscellaneous">
    <text>Can use both ATP and GTP as phosphoryl donors. Phosphorylation by casein kinase 2 has been estimated to represent up to one quarter of the eukaryotic phosphoproteome.</text>
</comment>
<comment type="similarity">
    <text evidence="4">Belongs to the protein kinase superfamily. Ser/Thr protein kinase family. CK2 subfamily.</text>
</comment>
<protein>
    <recommendedName>
        <fullName>Casein kinase II subunit alpha</fullName>
        <shortName>CK II alpha</shortName>
        <ecNumber evidence="3">2.7.11.1</ecNumber>
    </recommendedName>
</protein>
<evidence type="ECO:0000250" key="1"/>
<evidence type="ECO:0000250" key="2">
    <source>
        <dbReference type="UniProtKB" id="P19139"/>
    </source>
</evidence>
<evidence type="ECO:0000250" key="3">
    <source>
        <dbReference type="UniProtKB" id="P68400"/>
    </source>
</evidence>
<evidence type="ECO:0000255" key="4">
    <source>
        <dbReference type="PROSITE-ProRule" id="PRU00159"/>
    </source>
</evidence>
<evidence type="ECO:0000305" key="5"/>
<sequence length="391" mass="45144">MSGPVPSRARVYTDVNTHRPREYWDYESHVVEWGNQDDYQLVRKLGRGKYSEVFEAINITNNEKVVVKILKPVKKKKIKREIKILENLRGGPNIITLADIVKDPVSRTPALVFEHVNNTDFKQLYQTLTDYDIRFYMYEILKALDYCHSMGIMHRDVKPHNVMIDHEHRKLRLIDWGLAEFYHPGQEYNVRVASRYFKGPELLVDYQMYDYSLDMWSLGCMLASMIFRKEPFFHGHDNYDQLVRIAKVLGTEDLYDYIDKYNIELDPRFNDILGRHSRKRWERFVHSENQHLVSPEALDFLDKLLRYDHQSRLTAREAMEHPYFYTVVKDQARMGSSSMPGGSTPVSSANMMSGISSVPTPSPLGPLAGSPVIAAANPLGMPVPAAAGAQQ</sequence>
<organism>
    <name type="scientific">Bos taurus</name>
    <name type="common">Bovine</name>
    <dbReference type="NCBI Taxonomy" id="9913"/>
    <lineage>
        <taxon>Eukaryota</taxon>
        <taxon>Metazoa</taxon>
        <taxon>Chordata</taxon>
        <taxon>Craniata</taxon>
        <taxon>Vertebrata</taxon>
        <taxon>Euteleostomi</taxon>
        <taxon>Mammalia</taxon>
        <taxon>Eutheria</taxon>
        <taxon>Laurasiatheria</taxon>
        <taxon>Artiodactyla</taxon>
        <taxon>Ruminantia</taxon>
        <taxon>Pecora</taxon>
        <taxon>Bovidae</taxon>
        <taxon>Bovinae</taxon>
        <taxon>Bos</taxon>
    </lineage>
</organism>
<name>CSK21_BOVIN</name>
<reference key="1">
    <citation type="journal article" date="1993" name="EMBO J.">
        <title>Evidence for the induction of casein kinase II in bovine lymphocytes transformed by the intracellular protozoan parasite Theileria parva.</title>
        <authorList>
            <person name="Ole-Moiyoi O.K."/>
            <person name="Brown W.C."/>
            <person name="Iams K.P."/>
            <person name="Nayar A."/>
            <person name="Tsukamoto T."/>
            <person name="Macklin M.D."/>
        </authorList>
    </citation>
    <scope>NUCLEOTIDE SEQUENCE [MRNA]</scope>
</reference>
<reference key="2">
    <citation type="submission" date="1990-10" db="EMBL/GenBank/DDBJ databases">
        <title>Nucleotide sequence of cDNA for casein kinase II alpha subunit from bovine testis.</title>
        <authorList>
            <person name="Watanabe M."/>
            <person name="Yuge M."/>
            <person name="Maeda O."/>
            <person name="Ohno S."/>
            <person name="Kawasaki H."/>
            <person name="Suzuki K."/>
            <person name="Hidaka H."/>
        </authorList>
    </citation>
    <scope>NUCLEOTIDE SEQUENCE [MRNA]</scope>
    <source>
        <tissue>Testis</tissue>
    </source>
</reference>
<reference key="3">
    <citation type="submission" date="2006-01" db="EMBL/GenBank/DDBJ databases">
        <authorList>
            <consortium name="NIH - Mammalian Gene Collection (MGC) project"/>
        </authorList>
    </citation>
    <scope>NUCLEOTIDE SEQUENCE [LARGE SCALE MRNA]</scope>
    <source>
        <strain>Hereford</strain>
        <tissue>Heart ventricle</tissue>
    </source>
</reference>
<reference key="4">
    <citation type="journal article" date="1990" name="J. Biol. Chem.">
        <title>Subunit structure of casein kinase II from bovine testis. Demonstration that the alpha and alpha' subunits are distinct polypeptides.</title>
        <authorList>
            <person name="Litchfield D.W."/>
            <person name="Lozeman F.J."/>
            <person name="Piening C."/>
            <person name="Sommercorn J."/>
            <person name="Takio K."/>
            <person name="Walsh K.A."/>
            <person name="Krebs E.G."/>
        </authorList>
    </citation>
    <scope>PROTEIN SEQUENCE OF 50-59; 103-122; 230-239; 248-279 AND 284-303</scope>
    <source>
        <tissue>Testis</tissue>
    </source>
</reference>